<feature type="chain" id="PRO_1000133505" description="Small ribosomal subunit protein bS6">
    <location>
        <begin position="1"/>
        <end position="153"/>
    </location>
</feature>
<feature type="region of interest" description="Disordered" evidence="2">
    <location>
        <begin position="94"/>
        <end position="153"/>
    </location>
</feature>
<dbReference type="EMBL" id="CP000633">
    <property type="protein sequence ID" value="ACM36087.1"/>
    <property type="molecule type" value="Genomic_DNA"/>
</dbReference>
<dbReference type="RefSeq" id="WP_015915511.1">
    <property type="nucleotide sequence ID" value="NC_011989.1"/>
</dbReference>
<dbReference type="SMR" id="B9JUU2"/>
<dbReference type="STRING" id="311402.Avi_1520"/>
<dbReference type="GeneID" id="60682177"/>
<dbReference type="KEGG" id="avi:Avi_1520"/>
<dbReference type="eggNOG" id="COG0360">
    <property type="taxonomic scope" value="Bacteria"/>
</dbReference>
<dbReference type="HOGENOM" id="CLU_113441_2_0_5"/>
<dbReference type="Proteomes" id="UP000001596">
    <property type="component" value="Chromosome 1"/>
</dbReference>
<dbReference type="GO" id="GO:0022627">
    <property type="term" value="C:cytosolic small ribosomal subunit"/>
    <property type="evidence" value="ECO:0007669"/>
    <property type="project" value="TreeGrafter"/>
</dbReference>
<dbReference type="GO" id="GO:0070181">
    <property type="term" value="F:small ribosomal subunit rRNA binding"/>
    <property type="evidence" value="ECO:0007669"/>
    <property type="project" value="TreeGrafter"/>
</dbReference>
<dbReference type="GO" id="GO:0003735">
    <property type="term" value="F:structural constituent of ribosome"/>
    <property type="evidence" value="ECO:0007669"/>
    <property type="project" value="InterPro"/>
</dbReference>
<dbReference type="GO" id="GO:0006412">
    <property type="term" value="P:translation"/>
    <property type="evidence" value="ECO:0007669"/>
    <property type="project" value="UniProtKB-UniRule"/>
</dbReference>
<dbReference type="CDD" id="cd00473">
    <property type="entry name" value="bS6"/>
    <property type="match status" value="1"/>
</dbReference>
<dbReference type="Gene3D" id="3.30.70.60">
    <property type="match status" value="1"/>
</dbReference>
<dbReference type="HAMAP" id="MF_00360">
    <property type="entry name" value="Ribosomal_bS6"/>
    <property type="match status" value="1"/>
</dbReference>
<dbReference type="InterPro" id="IPR000529">
    <property type="entry name" value="Ribosomal_bS6"/>
</dbReference>
<dbReference type="InterPro" id="IPR035980">
    <property type="entry name" value="Ribosomal_bS6_sf"/>
</dbReference>
<dbReference type="InterPro" id="IPR020814">
    <property type="entry name" value="Ribosomal_S6_plastid/chlpt"/>
</dbReference>
<dbReference type="InterPro" id="IPR014717">
    <property type="entry name" value="Transl_elong_EF1B/ribsomal_bS6"/>
</dbReference>
<dbReference type="NCBIfam" id="TIGR00166">
    <property type="entry name" value="S6"/>
    <property type="match status" value="1"/>
</dbReference>
<dbReference type="PANTHER" id="PTHR21011">
    <property type="entry name" value="MITOCHONDRIAL 28S RIBOSOMAL PROTEIN S6"/>
    <property type="match status" value="1"/>
</dbReference>
<dbReference type="PANTHER" id="PTHR21011:SF1">
    <property type="entry name" value="SMALL RIBOSOMAL SUBUNIT PROTEIN BS6M"/>
    <property type="match status" value="1"/>
</dbReference>
<dbReference type="Pfam" id="PF01250">
    <property type="entry name" value="Ribosomal_S6"/>
    <property type="match status" value="1"/>
</dbReference>
<dbReference type="SUPFAM" id="SSF54995">
    <property type="entry name" value="Ribosomal protein S6"/>
    <property type="match status" value="1"/>
</dbReference>
<keyword id="KW-1185">Reference proteome</keyword>
<keyword id="KW-0687">Ribonucleoprotein</keyword>
<keyword id="KW-0689">Ribosomal protein</keyword>
<keyword id="KW-0694">RNA-binding</keyword>
<keyword id="KW-0699">rRNA-binding</keyword>
<organism>
    <name type="scientific">Allorhizobium ampelinum (strain ATCC BAA-846 / DSM 112012 / S4)</name>
    <name type="common">Agrobacterium vitis (strain S4)</name>
    <dbReference type="NCBI Taxonomy" id="311402"/>
    <lineage>
        <taxon>Bacteria</taxon>
        <taxon>Pseudomonadati</taxon>
        <taxon>Pseudomonadota</taxon>
        <taxon>Alphaproteobacteria</taxon>
        <taxon>Hyphomicrobiales</taxon>
        <taxon>Rhizobiaceae</taxon>
        <taxon>Rhizobium/Agrobacterium group</taxon>
        <taxon>Allorhizobium</taxon>
        <taxon>Allorhizobium ampelinum</taxon>
    </lineage>
</organism>
<sequence>MALYEHVFLARQDMSAQQVDALVEQYKGVIEANGGKVGRVENWGLKSLTYRINKNRKAHYALMDIDAPAAAVHEVERQMRINEDVLRYMTIAVEAHEEGPSAMMQKRDRDDRPRRDGDRPDRGDRGDRGDRGPREGGRESFGDRPRRPREDRA</sequence>
<accession>B9JUU2</accession>
<evidence type="ECO:0000255" key="1">
    <source>
        <dbReference type="HAMAP-Rule" id="MF_00360"/>
    </source>
</evidence>
<evidence type="ECO:0000256" key="2">
    <source>
        <dbReference type="SAM" id="MobiDB-lite"/>
    </source>
</evidence>
<evidence type="ECO:0000305" key="3"/>
<reference key="1">
    <citation type="journal article" date="2009" name="J. Bacteriol.">
        <title>Genome sequences of three Agrobacterium biovars help elucidate the evolution of multichromosome genomes in bacteria.</title>
        <authorList>
            <person name="Slater S.C."/>
            <person name="Goldman B.S."/>
            <person name="Goodner B."/>
            <person name="Setubal J.C."/>
            <person name="Farrand S.K."/>
            <person name="Nester E.W."/>
            <person name="Burr T.J."/>
            <person name="Banta L."/>
            <person name="Dickerman A.W."/>
            <person name="Paulsen I."/>
            <person name="Otten L."/>
            <person name="Suen G."/>
            <person name="Welch R."/>
            <person name="Almeida N.F."/>
            <person name="Arnold F."/>
            <person name="Burton O.T."/>
            <person name="Du Z."/>
            <person name="Ewing A."/>
            <person name="Godsy E."/>
            <person name="Heisel S."/>
            <person name="Houmiel K.L."/>
            <person name="Jhaveri J."/>
            <person name="Lu J."/>
            <person name="Miller N.M."/>
            <person name="Norton S."/>
            <person name="Chen Q."/>
            <person name="Phoolcharoen W."/>
            <person name="Ohlin V."/>
            <person name="Ondrusek D."/>
            <person name="Pride N."/>
            <person name="Stricklin S.L."/>
            <person name="Sun J."/>
            <person name="Wheeler C."/>
            <person name="Wilson L."/>
            <person name="Zhu H."/>
            <person name="Wood D.W."/>
        </authorList>
    </citation>
    <scope>NUCLEOTIDE SEQUENCE [LARGE SCALE GENOMIC DNA]</scope>
    <source>
        <strain>ATCC BAA-846 / DSM 112012 / S4</strain>
    </source>
</reference>
<protein>
    <recommendedName>
        <fullName evidence="1">Small ribosomal subunit protein bS6</fullName>
    </recommendedName>
    <alternativeName>
        <fullName evidence="3">30S ribosomal protein S6</fullName>
    </alternativeName>
</protein>
<gene>
    <name evidence="1" type="primary">rpsF</name>
    <name type="ordered locus">Avi_1520</name>
</gene>
<name>RS6_ALLAM</name>
<proteinExistence type="inferred from homology"/>
<comment type="function">
    <text evidence="1">Binds together with bS18 to 16S ribosomal RNA.</text>
</comment>
<comment type="similarity">
    <text evidence="1">Belongs to the bacterial ribosomal protein bS6 family.</text>
</comment>